<accession>B4E5E7</accession>
<organism>
    <name type="scientific">Burkholderia cenocepacia (strain ATCC BAA-245 / DSM 16553 / LMG 16656 / NCTC 13227 / J2315 / CF5610)</name>
    <name type="common">Burkholderia cepacia (strain J2315)</name>
    <dbReference type="NCBI Taxonomy" id="216591"/>
    <lineage>
        <taxon>Bacteria</taxon>
        <taxon>Pseudomonadati</taxon>
        <taxon>Pseudomonadota</taxon>
        <taxon>Betaproteobacteria</taxon>
        <taxon>Burkholderiales</taxon>
        <taxon>Burkholderiaceae</taxon>
        <taxon>Burkholderia</taxon>
        <taxon>Burkholderia cepacia complex</taxon>
    </lineage>
</organism>
<proteinExistence type="inferred from homology"/>
<evidence type="ECO:0000255" key="1">
    <source>
        <dbReference type="HAMAP-Rule" id="MF_01368"/>
    </source>
</evidence>
<evidence type="ECO:0000305" key="2"/>
<protein>
    <recommendedName>
        <fullName evidence="1">Large ribosomal subunit protein bL17</fullName>
    </recommendedName>
    <alternativeName>
        <fullName evidence="2">50S ribosomal protein L17</fullName>
    </alternativeName>
</protein>
<feature type="chain" id="PRO_1000144389" description="Large ribosomal subunit protein bL17">
    <location>
        <begin position="1"/>
        <end position="131"/>
    </location>
</feature>
<comment type="subunit">
    <text evidence="1">Part of the 50S ribosomal subunit. Contacts protein L32.</text>
</comment>
<comment type="similarity">
    <text evidence="1">Belongs to the bacterial ribosomal protein bL17 family.</text>
</comment>
<keyword id="KW-0687">Ribonucleoprotein</keyword>
<keyword id="KW-0689">Ribosomal protein</keyword>
<dbReference type="EMBL" id="AM747720">
    <property type="protein sequence ID" value="CAR50572.1"/>
    <property type="molecule type" value="Genomic_DNA"/>
</dbReference>
<dbReference type="RefSeq" id="WP_006477175.1">
    <property type="nucleotide sequence ID" value="NC_011000.1"/>
</dbReference>
<dbReference type="SMR" id="B4E5E7"/>
<dbReference type="GeneID" id="98107133"/>
<dbReference type="KEGG" id="bcj:BCAL0261"/>
<dbReference type="eggNOG" id="COG0203">
    <property type="taxonomic scope" value="Bacteria"/>
</dbReference>
<dbReference type="HOGENOM" id="CLU_074407_2_0_4"/>
<dbReference type="BioCyc" id="BCEN216591:G1G1V-304-MONOMER"/>
<dbReference type="Proteomes" id="UP000001035">
    <property type="component" value="Chromosome 1"/>
</dbReference>
<dbReference type="GO" id="GO:0022625">
    <property type="term" value="C:cytosolic large ribosomal subunit"/>
    <property type="evidence" value="ECO:0007669"/>
    <property type="project" value="TreeGrafter"/>
</dbReference>
<dbReference type="GO" id="GO:0003735">
    <property type="term" value="F:structural constituent of ribosome"/>
    <property type="evidence" value="ECO:0007669"/>
    <property type="project" value="InterPro"/>
</dbReference>
<dbReference type="GO" id="GO:0006412">
    <property type="term" value="P:translation"/>
    <property type="evidence" value="ECO:0007669"/>
    <property type="project" value="UniProtKB-UniRule"/>
</dbReference>
<dbReference type="FunFam" id="3.90.1030.10:FF:000001">
    <property type="entry name" value="50S ribosomal protein L17"/>
    <property type="match status" value="1"/>
</dbReference>
<dbReference type="Gene3D" id="3.90.1030.10">
    <property type="entry name" value="Ribosomal protein L17"/>
    <property type="match status" value="1"/>
</dbReference>
<dbReference type="HAMAP" id="MF_01368">
    <property type="entry name" value="Ribosomal_bL17"/>
    <property type="match status" value="1"/>
</dbReference>
<dbReference type="InterPro" id="IPR000456">
    <property type="entry name" value="Ribosomal_bL17"/>
</dbReference>
<dbReference type="InterPro" id="IPR047859">
    <property type="entry name" value="Ribosomal_bL17_CS"/>
</dbReference>
<dbReference type="InterPro" id="IPR036373">
    <property type="entry name" value="Ribosomal_bL17_sf"/>
</dbReference>
<dbReference type="NCBIfam" id="TIGR00059">
    <property type="entry name" value="L17"/>
    <property type="match status" value="1"/>
</dbReference>
<dbReference type="PANTHER" id="PTHR14413:SF16">
    <property type="entry name" value="LARGE RIBOSOMAL SUBUNIT PROTEIN BL17M"/>
    <property type="match status" value="1"/>
</dbReference>
<dbReference type="PANTHER" id="PTHR14413">
    <property type="entry name" value="RIBOSOMAL PROTEIN L17"/>
    <property type="match status" value="1"/>
</dbReference>
<dbReference type="Pfam" id="PF01196">
    <property type="entry name" value="Ribosomal_L17"/>
    <property type="match status" value="1"/>
</dbReference>
<dbReference type="SUPFAM" id="SSF64263">
    <property type="entry name" value="Prokaryotic ribosomal protein L17"/>
    <property type="match status" value="1"/>
</dbReference>
<dbReference type="PROSITE" id="PS01167">
    <property type="entry name" value="RIBOSOMAL_L17"/>
    <property type="match status" value="1"/>
</dbReference>
<reference key="1">
    <citation type="journal article" date="2009" name="J. Bacteriol.">
        <title>The genome of Burkholderia cenocepacia J2315, an epidemic pathogen of cystic fibrosis patients.</title>
        <authorList>
            <person name="Holden M.T."/>
            <person name="Seth-Smith H.M."/>
            <person name="Crossman L.C."/>
            <person name="Sebaihia M."/>
            <person name="Bentley S.D."/>
            <person name="Cerdeno-Tarraga A.M."/>
            <person name="Thomson N.R."/>
            <person name="Bason N."/>
            <person name="Quail M.A."/>
            <person name="Sharp S."/>
            <person name="Cherevach I."/>
            <person name="Churcher C."/>
            <person name="Goodhead I."/>
            <person name="Hauser H."/>
            <person name="Holroyd N."/>
            <person name="Mungall K."/>
            <person name="Scott P."/>
            <person name="Walker D."/>
            <person name="White B."/>
            <person name="Rose H."/>
            <person name="Iversen P."/>
            <person name="Mil-Homens D."/>
            <person name="Rocha E.P."/>
            <person name="Fialho A.M."/>
            <person name="Baldwin A."/>
            <person name="Dowson C."/>
            <person name="Barrell B.G."/>
            <person name="Govan J.R."/>
            <person name="Vandamme P."/>
            <person name="Hart C.A."/>
            <person name="Mahenthiralingam E."/>
            <person name="Parkhill J."/>
        </authorList>
    </citation>
    <scope>NUCLEOTIDE SEQUENCE [LARGE SCALE GENOMIC DNA]</scope>
    <source>
        <strain>ATCC BAA-245 / DSM 16553 / LMG 16656 / NCTC 13227 / J2315 / CF5610</strain>
    </source>
</reference>
<gene>
    <name evidence="1" type="primary">rplQ</name>
    <name type="ordered locus">BceJ2315_02640</name>
    <name type="ORF">BCAL0261</name>
</gene>
<name>RL17_BURCJ</name>
<sequence>MRHRHGLRKLNRTSSHRLAMLRNMSNSLIEHEVIKTTLPKAKELRKVVEPLITLGKKPSLANRRLAFNRLRDRDSVAKLFDVLGPRFANRPGGYLRVLKFGFRVGDNAPMALVELLDRPEVDETENVQEAE</sequence>